<organism>
    <name type="scientific">Homo sapiens</name>
    <name type="common">Human</name>
    <dbReference type="NCBI Taxonomy" id="9606"/>
    <lineage>
        <taxon>Eukaryota</taxon>
        <taxon>Metazoa</taxon>
        <taxon>Chordata</taxon>
        <taxon>Craniata</taxon>
        <taxon>Vertebrata</taxon>
        <taxon>Euteleostomi</taxon>
        <taxon>Mammalia</taxon>
        <taxon>Eutheria</taxon>
        <taxon>Euarchontoglires</taxon>
        <taxon>Primates</taxon>
        <taxon>Haplorrhini</taxon>
        <taxon>Catarrhini</taxon>
        <taxon>Hominidae</taxon>
        <taxon>Homo</taxon>
    </lineage>
</organism>
<evidence type="ECO:0000250" key="1">
    <source>
        <dbReference type="UniProtKB" id="P00130"/>
    </source>
</evidence>
<evidence type="ECO:0000250" key="2">
    <source>
        <dbReference type="UniProtKB" id="P22289"/>
    </source>
</evidence>
<evidence type="ECO:0000250" key="3">
    <source>
        <dbReference type="UniProtKB" id="Q8R1I1"/>
    </source>
</evidence>
<evidence type="ECO:0000269" key="4">
    <source>
    </source>
</evidence>
<evidence type="ECO:0000269" key="5">
    <source>
    </source>
</evidence>
<evidence type="ECO:0000305" key="6"/>
<evidence type="ECO:0007744" key="7">
    <source>
    </source>
</evidence>
<evidence type="ECO:0007829" key="8">
    <source>
        <dbReference type="PDB" id="5XTE"/>
    </source>
</evidence>
<accession>Q9UDW1</accession>
<accession>B5MCM5</accession>
<accession>Q9T2V6</accession>
<proteinExistence type="evidence at protein level"/>
<dbReference type="EMBL" id="AB028598">
    <property type="protein sequence ID" value="BAB20672.1"/>
    <property type="molecule type" value="mRNA"/>
</dbReference>
<dbReference type="EMBL" id="AF161468">
    <property type="protein sequence ID" value="AAF29083.1"/>
    <property type="molecule type" value="mRNA"/>
</dbReference>
<dbReference type="EMBL" id="AC004882">
    <property type="status" value="NOT_ANNOTATED_CDS"/>
    <property type="molecule type" value="Genomic_DNA"/>
</dbReference>
<dbReference type="EMBL" id="BC005402">
    <property type="protein sequence ID" value="AAH05402.1"/>
    <property type="molecule type" value="mRNA"/>
</dbReference>
<dbReference type="EMBL" id="BC015971">
    <property type="protein sequence ID" value="AAH15971.1"/>
    <property type="molecule type" value="mRNA"/>
</dbReference>
<dbReference type="CCDS" id="CCDS46680.1">
    <molecule id="Q9UDW1-1"/>
</dbReference>
<dbReference type="CCDS" id="CCDS46681.1">
    <molecule id="Q9UDW1-2"/>
</dbReference>
<dbReference type="RefSeq" id="NP_001003684.1">
    <molecule id="Q9UDW1-2"/>
    <property type="nucleotide sequence ID" value="NM_001003684.2"/>
</dbReference>
<dbReference type="RefSeq" id="NP_037519.2">
    <molecule id="Q9UDW1-1"/>
    <property type="nucleotide sequence ID" value="NM_013387.3"/>
</dbReference>
<dbReference type="PDB" id="5XTE">
    <property type="method" value="EM"/>
    <property type="resolution" value="3.40 A"/>
    <property type="chains" value="D/Q=2-63"/>
</dbReference>
<dbReference type="PDB" id="5XTH">
    <property type="method" value="EM"/>
    <property type="resolution" value="3.90 A"/>
    <property type="chains" value="AD/AQ=2-63"/>
</dbReference>
<dbReference type="PDB" id="5XTI">
    <property type="method" value="EM"/>
    <property type="resolution" value="17.40 A"/>
    <property type="chains" value="AD/AQ=2-63"/>
</dbReference>
<dbReference type="PDBsum" id="5XTE"/>
<dbReference type="PDBsum" id="5XTH"/>
<dbReference type="PDBsum" id="5XTI"/>
<dbReference type="SMR" id="Q9UDW1"/>
<dbReference type="BioGRID" id="118920">
    <property type="interactions" value="74"/>
</dbReference>
<dbReference type="ComplexPortal" id="CPX-560">
    <property type="entry name" value="Mitochondrial respiratory chain complex III"/>
</dbReference>
<dbReference type="FunCoup" id="Q9UDW1">
    <property type="interactions" value="667"/>
</dbReference>
<dbReference type="IntAct" id="Q9UDW1">
    <property type="interactions" value="29"/>
</dbReference>
<dbReference type="MINT" id="Q9UDW1"/>
<dbReference type="STRING" id="9606.ENSP00000332887"/>
<dbReference type="ChEMBL" id="CHEMBL2388"/>
<dbReference type="DrugBank" id="DB07763">
    <property type="generic name" value="(5S)-3-ANILINO-5-(2,4-DIFLUOROPHENYL)-5-METHYL-1,3-OXAZOLIDINE-2,4-DIONE"/>
</dbReference>
<dbReference type="DrugBank" id="DB07778">
    <property type="generic name" value="(S)-famoxadone"/>
</dbReference>
<dbReference type="DrugBank" id="DB04141">
    <property type="generic name" value="2-Hexyloxy-6-Hydroxymethyl-Tetrahydro-Pyran-3,4,5-Triol"/>
</dbReference>
<dbReference type="DrugBank" id="DB08453">
    <property type="generic name" value="2-Nonyl-4-quinolinol 1-oxide"/>
</dbReference>
<dbReference type="DrugBank" id="DB07636">
    <property type="generic name" value="5-Heptyl-6-hydroxy-1,3-benzothiazole-4,7-dione"/>
</dbReference>
<dbReference type="DrugBank" id="DB04799">
    <property type="generic name" value="6-Hydroxy-5-undecyl-4,7-benzothiazoledione"/>
</dbReference>
<dbReference type="DrugBank" id="DB07401">
    <property type="generic name" value="Azoxystrobin"/>
</dbReference>
<dbReference type="DrugBank" id="DB08330">
    <property type="generic name" value="METHYL (2Z)-3-METHOXY-2-{2-[(E)-2-PHENYLVINYL]PHENYL}ACRYLATE"/>
</dbReference>
<dbReference type="DrugBank" id="DB08690">
    <property type="generic name" value="Ubiquinone Q2"/>
</dbReference>
<dbReference type="GlyGen" id="Q9UDW1">
    <property type="glycosylation" value="1 site, 1 O-linked glycan (1 site)"/>
</dbReference>
<dbReference type="iPTMnet" id="Q9UDW1"/>
<dbReference type="SwissPalm" id="Q9UDW1"/>
<dbReference type="BioMuta" id="UQCR10"/>
<dbReference type="DMDM" id="9297078"/>
<dbReference type="jPOST" id="Q9UDW1"/>
<dbReference type="MassIVE" id="Q9UDW1"/>
<dbReference type="PaxDb" id="9606-ENSP00000332887"/>
<dbReference type="PeptideAtlas" id="Q9UDW1"/>
<dbReference type="ProteomicsDB" id="84120">
    <molecule id="Q9UDW1-1"/>
</dbReference>
<dbReference type="ProteomicsDB" id="84121">
    <molecule id="Q9UDW1-2"/>
</dbReference>
<dbReference type="Pumba" id="Q9UDW1"/>
<dbReference type="TopDownProteomics" id="Q9UDW1-1">
    <molecule id="Q9UDW1-1"/>
</dbReference>
<dbReference type="TopDownProteomics" id="Q9UDW1-2">
    <molecule id="Q9UDW1-2"/>
</dbReference>
<dbReference type="Antibodypedia" id="24577">
    <property type="antibodies" value="86 antibodies from 22 providers"/>
</dbReference>
<dbReference type="DNASU" id="29796"/>
<dbReference type="Ensembl" id="ENST00000330029.6">
    <molecule id="Q9UDW1-1"/>
    <property type="protein sequence ID" value="ENSP00000332887.6"/>
    <property type="gene ID" value="ENSG00000184076.13"/>
</dbReference>
<dbReference type="Ensembl" id="ENST00000401406.3">
    <molecule id="Q9UDW1-2"/>
    <property type="protein sequence ID" value="ENSP00000384962.3"/>
    <property type="gene ID" value="ENSG00000184076.13"/>
</dbReference>
<dbReference type="GeneID" id="29796"/>
<dbReference type="KEGG" id="hsa:29796"/>
<dbReference type="MANE-Select" id="ENST00000330029.6">
    <property type="protein sequence ID" value="ENSP00000332887.6"/>
    <property type="RefSeq nucleotide sequence ID" value="NM_013387.4"/>
    <property type="RefSeq protein sequence ID" value="NP_037519.2"/>
</dbReference>
<dbReference type="UCSC" id="uc003agp.2">
    <molecule id="Q9UDW1-1"/>
    <property type="organism name" value="human"/>
</dbReference>
<dbReference type="AGR" id="HGNC:30863"/>
<dbReference type="CTD" id="29796"/>
<dbReference type="DisGeNET" id="29796"/>
<dbReference type="GeneCards" id="UQCR10"/>
<dbReference type="HGNC" id="HGNC:30863">
    <property type="gene designation" value="UQCR10"/>
</dbReference>
<dbReference type="HPA" id="ENSG00000184076">
    <property type="expression patterns" value="Low tissue specificity"/>
</dbReference>
<dbReference type="MalaCards" id="UQCR10"/>
<dbReference type="MIM" id="610843">
    <property type="type" value="gene"/>
</dbReference>
<dbReference type="neXtProt" id="NX_Q9UDW1"/>
<dbReference type="OpenTargets" id="ENSG00000184076"/>
<dbReference type="PharmGKB" id="PA165378374"/>
<dbReference type="VEuPathDB" id="HostDB:ENSG00000184076"/>
<dbReference type="eggNOG" id="KOG3494">
    <property type="taxonomic scope" value="Eukaryota"/>
</dbReference>
<dbReference type="GeneTree" id="ENSGT00390000014052"/>
<dbReference type="HOGENOM" id="CLU_171977_2_0_1"/>
<dbReference type="InParanoid" id="Q9UDW1"/>
<dbReference type="OMA" id="IKHKYEV"/>
<dbReference type="OrthoDB" id="44067at2759"/>
<dbReference type="PAN-GO" id="Q9UDW1">
    <property type="GO annotations" value="2 GO annotations based on evolutionary models"/>
</dbReference>
<dbReference type="PhylomeDB" id="Q9UDW1"/>
<dbReference type="TreeFam" id="TF324385"/>
<dbReference type="BioCyc" id="MetaCyc:HS15855-MONOMER"/>
<dbReference type="PathwayCommons" id="Q9UDW1"/>
<dbReference type="Reactome" id="R-HSA-611105">
    <property type="pathway name" value="Respiratory electron transport"/>
</dbReference>
<dbReference type="Reactome" id="R-HSA-9865881">
    <property type="pathway name" value="Complex III assembly"/>
</dbReference>
<dbReference type="SignaLink" id="Q9UDW1"/>
<dbReference type="SIGNOR" id="Q9UDW1"/>
<dbReference type="BioGRID-ORCS" id="29796">
    <property type="hits" value="219 hits in 1149 CRISPR screens"/>
</dbReference>
<dbReference type="ChiTaRS" id="UQCR10">
    <property type="organism name" value="human"/>
</dbReference>
<dbReference type="GeneWiki" id="UCRC"/>
<dbReference type="GenomeRNAi" id="29796"/>
<dbReference type="Pharos" id="Q9UDW1">
    <property type="development level" value="Tbio"/>
</dbReference>
<dbReference type="PRO" id="PR:Q9UDW1"/>
<dbReference type="Proteomes" id="UP000005640">
    <property type="component" value="Chromosome 22"/>
</dbReference>
<dbReference type="RNAct" id="Q9UDW1">
    <property type="molecule type" value="protein"/>
</dbReference>
<dbReference type="Bgee" id="ENSG00000184076">
    <property type="expression patterns" value="Expressed in body of tongue and 211 other cell types or tissues"/>
</dbReference>
<dbReference type="GO" id="GO:0005743">
    <property type="term" value="C:mitochondrial inner membrane"/>
    <property type="evidence" value="ECO:0000314"/>
    <property type="project" value="ComplexPortal"/>
</dbReference>
<dbReference type="GO" id="GO:0005739">
    <property type="term" value="C:mitochondrion"/>
    <property type="evidence" value="ECO:0006056"/>
    <property type="project" value="FlyBase"/>
</dbReference>
<dbReference type="GO" id="GO:0045275">
    <property type="term" value="C:respiratory chain complex III"/>
    <property type="evidence" value="ECO:0000318"/>
    <property type="project" value="GO_Central"/>
</dbReference>
<dbReference type="GO" id="GO:0008121">
    <property type="term" value="F:ubiquinol-cytochrome-c reductase activity"/>
    <property type="evidence" value="ECO:0000303"/>
    <property type="project" value="UniProtKB"/>
</dbReference>
<dbReference type="GO" id="GO:0045333">
    <property type="term" value="P:cellular respiration"/>
    <property type="evidence" value="ECO:0000303"/>
    <property type="project" value="ComplexPortal"/>
</dbReference>
<dbReference type="GO" id="GO:0006122">
    <property type="term" value="P:mitochondrial electron transport, ubiquinol to cytochrome c"/>
    <property type="evidence" value="ECO:0000318"/>
    <property type="project" value="GO_Central"/>
</dbReference>
<dbReference type="FunFam" id="1.20.5.260:FF:000001">
    <property type="entry name" value="Cytochrome b-c1 complex subunit 9"/>
    <property type="match status" value="1"/>
</dbReference>
<dbReference type="Gene3D" id="1.20.5.260">
    <property type="entry name" value="Cytochrome b-c1 complex subunit 9"/>
    <property type="match status" value="1"/>
</dbReference>
<dbReference type="InterPro" id="IPR008027">
    <property type="entry name" value="QCR9"/>
</dbReference>
<dbReference type="InterPro" id="IPR036656">
    <property type="entry name" value="QCR9_sf"/>
</dbReference>
<dbReference type="PANTHER" id="PTHR12980:SF0">
    <property type="entry name" value="CYTOCHROME B-C1 COMPLEX SUBUNIT 9"/>
    <property type="match status" value="1"/>
</dbReference>
<dbReference type="PANTHER" id="PTHR12980">
    <property type="entry name" value="UBIQUINOL-CYTOCHROME C REDUCTASE COMPLEX, SUBUNIT X"/>
    <property type="match status" value="1"/>
</dbReference>
<dbReference type="Pfam" id="PF05365">
    <property type="entry name" value="UCR_UQCRX_QCR9"/>
    <property type="match status" value="1"/>
</dbReference>
<dbReference type="SUPFAM" id="SSF81514">
    <property type="entry name" value="Subunit X (non-heme 7 kDa protein) of cytochrome bc1 complex (Ubiquinol-cytochrome c reductase)"/>
    <property type="match status" value="1"/>
</dbReference>
<sequence>MAAATLTSKLYSLLFRRTSTFALTIIVGVMFFERAFDQGADAIYDHINEGKLWKHIKHKYENK</sequence>
<reference key="1">
    <citation type="submission" date="1999-06" db="EMBL/GenBank/DDBJ databases">
        <title>Isolation and characterization of a human cDNA homologous to the bovine ubiquinol-cytochrome c reductase 7.2kDa protein.</title>
        <authorList>
            <person name="Nakamura Y."/>
        </authorList>
    </citation>
    <scope>NUCLEOTIDE SEQUENCE [MRNA] (ISOFORM 1)</scope>
</reference>
<reference key="2">
    <citation type="journal article" date="2000" name="Genome Res.">
        <title>Cloning and functional analysis of cDNAs with open reading frames for 300 previously undefined genes expressed in CD34+ hematopoietic stem/progenitor cells.</title>
        <authorList>
            <person name="Zhang Q.-H."/>
            <person name="Ye M."/>
            <person name="Wu X.-Y."/>
            <person name="Ren S.-X."/>
            <person name="Zhao M."/>
            <person name="Zhao C.-J."/>
            <person name="Fu G."/>
            <person name="Shen Y."/>
            <person name="Fan H.-Y."/>
            <person name="Lu G."/>
            <person name="Zhong M."/>
            <person name="Xu X.-R."/>
            <person name="Han Z.-G."/>
            <person name="Zhang J.-W."/>
            <person name="Tao J."/>
            <person name="Huang Q.-H."/>
            <person name="Zhou J."/>
            <person name="Hu G.-X."/>
            <person name="Gu J."/>
            <person name="Chen S.-J."/>
            <person name="Chen Z."/>
        </authorList>
    </citation>
    <scope>NUCLEOTIDE SEQUENCE [LARGE SCALE MRNA] (ISOFORM 1)</scope>
    <source>
        <tissue>Umbilical cord blood</tissue>
    </source>
</reference>
<reference key="3">
    <citation type="journal article" date="1999" name="Nature">
        <title>The DNA sequence of human chromosome 22.</title>
        <authorList>
            <person name="Dunham I."/>
            <person name="Hunt A.R."/>
            <person name="Collins J.E."/>
            <person name="Bruskiewich R."/>
            <person name="Beare D.M."/>
            <person name="Clamp M."/>
            <person name="Smink L.J."/>
            <person name="Ainscough R."/>
            <person name="Almeida J.P."/>
            <person name="Babbage A.K."/>
            <person name="Bagguley C."/>
            <person name="Bailey J."/>
            <person name="Barlow K.F."/>
            <person name="Bates K.N."/>
            <person name="Beasley O.P."/>
            <person name="Bird C.P."/>
            <person name="Blakey S.E."/>
            <person name="Bridgeman A.M."/>
            <person name="Buck D."/>
            <person name="Burgess J."/>
            <person name="Burrill W.D."/>
            <person name="Burton J."/>
            <person name="Carder C."/>
            <person name="Carter N.P."/>
            <person name="Chen Y."/>
            <person name="Clark G."/>
            <person name="Clegg S.M."/>
            <person name="Cobley V.E."/>
            <person name="Cole C.G."/>
            <person name="Collier R.E."/>
            <person name="Connor R."/>
            <person name="Conroy D."/>
            <person name="Corby N.R."/>
            <person name="Coville G.J."/>
            <person name="Cox A.V."/>
            <person name="Davis J."/>
            <person name="Dawson E."/>
            <person name="Dhami P.D."/>
            <person name="Dockree C."/>
            <person name="Dodsworth S.J."/>
            <person name="Durbin R.M."/>
            <person name="Ellington A.G."/>
            <person name="Evans K.L."/>
            <person name="Fey J.M."/>
            <person name="Fleming K."/>
            <person name="French L."/>
            <person name="Garner A.A."/>
            <person name="Gilbert J.G.R."/>
            <person name="Goward M.E."/>
            <person name="Grafham D.V."/>
            <person name="Griffiths M.N.D."/>
            <person name="Hall C."/>
            <person name="Hall R.E."/>
            <person name="Hall-Tamlyn G."/>
            <person name="Heathcott R.W."/>
            <person name="Ho S."/>
            <person name="Holmes S."/>
            <person name="Hunt S.E."/>
            <person name="Jones M.C."/>
            <person name="Kershaw J."/>
            <person name="Kimberley A.M."/>
            <person name="King A."/>
            <person name="Laird G.K."/>
            <person name="Langford C.F."/>
            <person name="Leversha M.A."/>
            <person name="Lloyd C."/>
            <person name="Lloyd D.M."/>
            <person name="Martyn I.D."/>
            <person name="Mashreghi-Mohammadi M."/>
            <person name="Matthews L.H."/>
            <person name="Mccann O.T."/>
            <person name="Mcclay J."/>
            <person name="Mclaren S."/>
            <person name="McMurray A.A."/>
            <person name="Milne S.A."/>
            <person name="Mortimore B.J."/>
            <person name="Odell C.N."/>
            <person name="Pavitt R."/>
            <person name="Pearce A.V."/>
            <person name="Pearson D."/>
            <person name="Phillimore B.J.C.T."/>
            <person name="Phillips S.H."/>
            <person name="Plumb R.W."/>
            <person name="Ramsay H."/>
            <person name="Ramsey Y."/>
            <person name="Rogers L."/>
            <person name="Ross M.T."/>
            <person name="Scott C.E."/>
            <person name="Sehra H.K."/>
            <person name="Skuce C.D."/>
            <person name="Smalley S."/>
            <person name="Smith M.L."/>
            <person name="Soderlund C."/>
            <person name="Spragon L."/>
            <person name="Steward C.A."/>
            <person name="Sulston J.E."/>
            <person name="Swann R.M."/>
            <person name="Vaudin M."/>
            <person name="Wall M."/>
            <person name="Wallis J.M."/>
            <person name="Whiteley M.N."/>
            <person name="Willey D.L."/>
            <person name="Williams L."/>
            <person name="Williams S.A."/>
            <person name="Williamson H."/>
            <person name="Wilmer T.E."/>
            <person name="Wilming L."/>
            <person name="Wright C.L."/>
            <person name="Hubbard T."/>
            <person name="Bentley D.R."/>
            <person name="Beck S."/>
            <person name="Rogers J."/>
            <person name="Shimizu N."/>
            <person name="Minoshima S."/>
            <person name="Kawasaki K."/>
            <person name="Sasaki T."/>
            <person name="Asakawa S."/>
            <person name="Kudoh J."/>
            <person name="Shintani A."/>
            <person name="Shibuya K."/>
            <person name="Yoshizaki Y."/>
            <person name="Aoki N."/>
            <person name="Mitsuyama S."/>
            <person name="Roe B.A."/>
            <person name="Chen F."/>
            <person name="Chu L."/>
            <person name="Crabtree J."/>
            <person name="Deschamps S."/>
            <person name="Do A."/>
            <person name="Do T."/>
            <person name="Dorman A."/>
            <person name="Fang F."/>
            <person name="Fu Y."/>
            <person name="Hu P."/>
            <person name="Hua A."/>
            <person name="Kenton S."/>
            <person name="Lai H."/>
            <person name="Lao H.I."/>
            <person name="Lewis J."/>
            <person name="Lewis S."/>
            <person name="Lin S.-P."/>
            <person name="Loh P."/>
            <person name="Malaj E."/>
            <person name="Nguyen T."/>
            <person name="Pan H."/>
            <person name="Phan S."/>
            <person name="Qi S."/>
            <person name="Qian Y."/>
            <person name="Ray L."/>
            <person name="Ren Q."/>
            <person name="Shaull S."/>
            <person name="Sloan D."/>
            <person name="Song L."/>
            <person name="Wang Q."/>
            <person name="Wang Y."/>
            <person name="Wang Z."/>
            <person name="White J."/>
            <person name="Willingham D."/>
            <person name="Wu H."/>
            <person name="Yao Z."/>
            <person name="Zhan M."/>
            <person name="Zhang G."/>
            <person name="Chissoe S."/>
            <person name="Murray J."/>
            <person name="Miller N."/>
            <person name="Minx P."/>
            <person name="Fulton R."/>
            <person name="Johnson D."/>
            <person name="Bemis G."/>
            <person name="Bentley D."/>
            <person name="Bradshaw H."/>
            <person name="Bourne S."/>
            <person name="Cordes M."/>
            <person name="Du Z."/>
            <person name="Fulton L."/>
            <person name="Goela D."/>
            <person name="Graves T."/>
            <person name="Hawkins J."/>
            <person name="Hinds K."/>
            <person name="Kemp K."/>
            <person name="Latreille P."/>
            <person name="Layman D."/>
            <person name="Ozersky P."/>
            <person name="Rohlfing T."/>
            <person name="Scheet P."/>
            <person name="Walker C."/>
            <person name="Wamsley A."/>
            <person name="Wohldmann P."/>
            <person name="Pepin K."/>
            <person name="Nelson J."/>
            <person name="Korf I."/>
            <person name="Bedell J.A."/>
            <person name="Hillier L.W."/>
            <person name="Mardis E."/>
            <person name="Waterston R."/>
            <person name="Wilson R."/>
            <person name="Emanuel B.S."/>
            <person name="Shaikh T."/>
            <person name="Kurahashi H."/>
            <person name="Saitta S."/>
            <person name="Budarf M.L."/>
            <person name="McDermid H.E."/>
            <person name="Johnson A."/>
            <person name="Wong A.C.C."/>
            <person name="Morrow B.E."/>
            <person name="Edelmann L."/>
            <person name="Kim U.J."/>
            <person name="Shizuya H."/>
            <person name="Simon M.I."/>
            <person name="Dumanski J.P."/>
            <person name="Peyrard M."/>
            <person name="Kedra D."/>
            <person name="Seroussi E."/>
            <person name="Fransson I."/>
            <person name="Tapia I."/>
            <person name="Bruder C.E."/>
            <person name="O'Brien K.P."/>
            <person name="Wilkinson P."/>
            <person name="Bodenteich A."/>
            <person name="Hartman K."/>
            <person name="Hu X."/>
            <person name="Khan A.S."/>
            <person name="Lane L."/>
            <person name="Tilahun Y."/>
            <person name="Wright H."/>
        </authorList>
    </citation>
    <scope>NUCLEOTIDE SEQUENCE [LARGE SCALE GENOMIC DNA]</scope>
</reference>
<reference key="4">
    <citation type="journal article" date="2004" name="Genome Res.">
        <title>The status, quality, and expansion of the NIH full-length cDNA project: the Mammalian Gene Collection (MGC).</title>
        <authorList>
            <consortium name="The MGC Project Team"/>
        </authorList>
    </citation>
    <scope>NUCLEOTIDE SEQUENCE [LARGE SCALE MRNA] (ISOFORM 1)</scope>
    <source>
        <tissue>Bone marrow</tissue>
        <tissue>Urinary bladder</tissue>
    </source>
</reference>
<reference key="5">
    <citation type="journal article" date="1995" name="Methods Enzymol.">
        <title>Ubiquinol-cytochrome-c reductase from human and bovine mitochondria.</title>
        <authorList>
            <person name="Schaegger H."/>
            <person name="Brandt U."/>
            <person name="Gencic S."/>
            <person name="von Jagow G."/>
        </authorList>
    </citation>
    <scope>PROTEIN SEQUENCE OF 2-16</scope>
    <source>
        <tissue>Heart</tissue>
        <tissue>Liver</tissue>
    </source>
</reference>
<reference key="6">
    <citation type="journal article" date="2011" name="BMC Syst. Biol.">
        <title>Initial characterization of the human central proteome.</title>
        <authorList>
            <person name="Burkard T.R."/>
            <person name="Planyavsky M."/>
            <person name="Kaupe I."/>
            <person name="Breitwieser F.P."/>
            <person name="Buerckstuemmer T."/>
            <person name="Bennett K.L."/>
            <person name="Superti-Furga G."/>
            <person name="Colinge J."/>
        </authorList>
    </citation>
    <scope>IDENTIFICATION BY MASS SPECTROMETRY [LARGE SCALE ANALYSIS]</scope>
</reference>
<reference key="7">
    <citation type="journal article" date="2014" name="J. Proteomics">
        <title>An enzyme assisted RP-RPLC approach for in-depth analysis of human liver phosphoproteome.</title>
        <authorList>
            <person name="Bian Y."/>
            <person name="Song C."/>
            <person name="Cheng K."/>
            <person name="Dong M."/>
            <person name="Wang F."/>
            <person name="Huang J."/>
            <person name="Sun D."/>
            <person name="Wang L."/>
            <person name="Ye M."/>
            <person name="Zou H."/>
        </authorList>
    </citation>
    <scope>IDENTIFICATION BY MASS SPECTROMETRY [LARGE SCALE ANALYSIS]</scope>
    <source>
        <tissue>Liver</tissue>
    </source>
</reference>
<reference key="8">
    <citation type="journal article" date="2015" name="Proteomics">
        <title>N-terminome analysis of the human mitochondrial proteome.</title>
        <authorList>
            <person name="Vaca Jacome A.S."/>
            <person name="Rabilloud T."/>
            <person name="Schaeffer-Reiss C."/>
            <person name="Rompais M."/>
            <person name="Ayoub D."/>
            <person name="Lane L."/>
            <person name="Bairoch A."/>
            <person name="Van Dorsselaer A."/>
            <person name="Carapito C."/>
        </authorList>
    </citation>
    <scope>CLEAVAGE OF INITIATOR METHIONINE [LARGE SCALE ANALYSIS]</scope>
    <scope>IDENTIFICATION BY MASS SPECTROMETRY [LARGE SCALE ANALYSIS]</scope>
</reference>
<reference key="9">
    <citation type="journal article" date="2017" name="Cell">
        <title>Architecture of human mitochondrial respiratory megacomplex I2III2IV2.</title>
        <authorList>
            <person name="Guo R."/>
            <person name="Zong S."/>
            <person name="Wu M."/>
            <person name="Gu J."/>
            <person name="Yang M."/>
        </authorList>
    </citation>
    <scope>STRUCTURE BY ELECTRON MICROSCOPY (3.40 ANGSTROMS)</scope>
</reference>
<protein>
    <recommendedName>
        <fullName>Cytochrome b-c1 complex subunit 9</fullName>
    </recommendedName>
    <alternativeName>
        <fullName>Complex III subunit 9</fullName>
    </alternativeName>
    <alternativeName>
        <fullName>Complex III subunit X</fullName>
    </alternativeName>
    <alternativeName>
        <fullName>Cytochrome c1 non-heme 7 kDa protein</fullName>
    </alternativeName>
    <alternativeName>
        <fullName>Ubiquinol-cytochrome c reductase complex 7.2 kDa protein</fullName>
    </alternativeName>
</protein>
<feature type="initiator methionine" description="Removed" evidence="5 7">
    <location>
        <position position="1"/>
    </location>
</feature>
<feature type="chain" id="PRO_0000193553" description="Cytochrome b-c1 complex subunit 9">
    <location>
        <begin position="2"/>
        <end position="63"/>
    </location>
</feature>
<feature type="topological domain" description="Mitochondrial matrix" evidence="4">
    <location>
        <begin position="2"/>
        <end position="21"/>
    </location>
</feature>
<feature type="transmembrane region" description="Helical" evidence="4">
    <location>
        <begin position="22"/>
        <end position="47"/>
    </location>
</feature>
<feature type="topological domain" description="Mitochondrial intermembrane" evidence="4">
    <location>
        <begin position="48"/>
        <end position="63"/>
    </location>
</feature>
<feature type="splice variant" id="VSP_041429" description="In isoform 2." evidence="6">
    <original>KLWKHIKHKYENK</original>
    <variation>VRACAIPDLGPA</variation>
    <location>
        <begin position="51"/>
        <end position="63"/>
    </location>
</feature>
<feature type="sequence variant" id="VAR_052444" description="In dbSNP:rs76013375.">
    <original>I</original>
    <variation>V</variation>
    <location>
        <position position="47"/>
    </location>
</feature>
<feature type="helix" evidence="8">
    <location>
        <begin position="6"/>
        <end position="13"/>
    </location>
</feature>
<feature type="turn" evidence="8">
    <location>
        <begin position="14"/>
        <end position="16"/>
    </location>
</feature>
<feature type="helix" evidence="8">
    <location>
        <begin position="18"/>
        <end position="47"/>
    </location>
</feature>
<feature type="turn" evidence="8">
    <location>
        <begin position="48"/>
        <end position="51"/>
    </location>
</feature>
<feature type="turn" evidence="8">
    <location>
        <begin position="53"/>
        <end position="56"/>
    </location>
</feature>
<feature type="helix" evidence="8">
    <location>
        <begin position="57"/>
        <end position="59"/>
    </location>
</feature>
<name>QCR9_HUMAN</name>
<keyword id="KW-0002">3D-structure</keyword>
<keyword id="KW-0025">Alternative splicing</keyword>
<keyword id="KW-0903">Direct protein sequencing</keyword>
<keyword id="KW-0249">Electron transport</keyword>
<keyword id="KW-0472">Membrane</keyword>
<keyword id="KW-0496">Mitochondrion</keyword>
<keyword id="KW-0999">Mitochondrion inner membrane</keyword>
<keyword id="KW-1267">Proteomics identification</keyword>
<keyword id="KW-1185">Reference proteome</keyword>
<keyword id="KW-0679">Respiratory chain</keyword>
<keyword id="KW-0812">Transmembrane</keyword>
<keyword id="KW-1133">Transmembrane helix</keyword>
<keyword id="KW-0813">Transport</keyword>
<comment type="function">
    <text evidence="2">Component of the ubiquinol-cytochrome c oxidoreductase, a multisubunit transmembrane complex that is part of the mitochondrial electron transport chain which drives oxidative phosphorylation. The respiratory chain contains 3 multisubunit complexes succinate dehydrogenase (complex II, CII), ubiquinol-cytochrome c oxidoreductase (cytochrome b-c1 complex, complex III, CIII) and cytochrome c oxidase (complex IV, CIV), that cooperate to transfer electrons derived from NADH and succinate to molecular oxygen, creating an electrochemical gradient over the inner membrane that drives transmembrane transport and the ATP synthase. The cytochrome b-c1 complex catalyzes electron transfer from ubiquinol to cytochrome c, linking this redox reaction to translocation of protons across the mitochondrial inner membrane, with protons being carried across the membrane as hydrogens on the quinol. In the process called Q cycle, 2 protons are consumed from the matrix, 4 protons are released into the intermembrane space and 2 electrons are passed to cytochrome c.</text>
</comment>
<comment type="subunit">
    <text evidence="1 3 4">Component of the ubiquinol-cytochrome c oxidoreductase (cytochrome b-c1 complex, complex III, CIII), a multisubunit enzyme composed of 11 subunits. The complex is composed of 3 respiratory subunits cytochrome b, cytochrome c1 and Rieske protein UQCRFS1, 2 core protein subunits UQCRC1/QCR1 and UQCRC2/QCR2, and 6 low-molecular weight protein subunits UQCRH/QCR6, UQCRB/QCR7, UQCRQ/QCR8, UQCR10/QCR9, UQCR11/QCR10 and subunit 9, the cleavage product of Rieske protein UQCRFS1 (By similarity). The complex exists as an obligatory dimer and forms supercomplexes (SCs) in the inner mitochondrial membrane with NADH-ubiquinone oxidoreductase (complex I, CI) and cytochrome c oxidase (complex IV, CIV), resulting in different assemblies (supercomplex SCI(1)III(2)IV(1) and megacomplex MCI(2)III(2)IV(2)) (PubMed:28844695). Interacts with STMP1 (By similarity).</text>
</comment>
<comment type="subcellular location">
    <subcellularLocation>
        <location evidence="2">Mitochondrion inner membrane</location>
        <topology evidence="2">Single-pass membrane protein</topology>
    </subcellularLocation>
</comment>
<comment type="alternative products">
    <event type="alternative splicing"/>
    <isoform>
        <id>Q9UDW1-1</id>
        <name>1</name>
        <sequence type="displayed"/>
    </isoform>
    <isoform>
        <id>Q9UDW1-2</id>
        <name>2</name>
        <sequence type="described" ref="VSP_041429"/>
    </isoform>
</comment>
<comment type="similarity">
    <text evidence="6">Belongs to the UQCR10/QCR9 family.</text>
</comment>
<gene>
    <name type="primary">UQCR10</name>
    <name type="synonym">UCRC</name>
    <name type="ORF">HSPC119</name>
</gene>